<comment type="function">
    <text evidence="1">One of the primary rRNA binding proteins, it binds directly to 16S rRNA where it nucleates assembly of the body of the 30S subunit.</text>
</comment>
<comment type="function">
    <text evidence="1">With S5 and S12 plays an important role in translational accuracy.</text>
</comment>
<comment type="subunit">
    <text evidence="1">Part of the 30S ribosomal subunit. Contacts protein S5. The interaction surface between S4 and S5 is involved in control of translational fidelity.</text>
</comment>
<comment type="similarity">
    <text evidence="1">Belongs to the universal ribosomal protein uS4 family.</text>
</comment>
<proteinExistence type="inferred from homology"/>
<protein>
    <recommendedName>
        <fullName evidence="1">Small ribosomal subunit protein uS4</fullName>
    </recommendedName>
    <alternativeName>
        <fullName evidence="2">30S ribosomal protein S4</fullName>
    </alternativeName>
</protein>
<dbReference type="EMBL" id="AM920689">
    <property type="protein sequence ID" value="CAP52801.1"/>
    <property type="molecule type" value="Genomic_DNA"/>
</dbReference>
<dbReference type="SMR" id="B0RU59"/>
<dbReference type="KEGG" id="xca:xcc-b100_3436"/>
<dbReference type="HOGENOM" id="CLU_092403_0_2_6"/>
<dbReference type="Proteomes" id="UP000001188">
    <property type="component" value="Chromosome"/>
</dbReference>
<dbReference type="GO" id="GO:0015935">
    <property type="term" value="C:small ribosomal subunit"/>
    <property type="evidence" value="ECO:0007669"/>
    <property type="project" value="InterPro"/>
</dbReference>
<dbReference type="GO" id="GO:0019843">
    <property type="term" value="F:rRNA binding"/>
    <property type="evidence" value="ECO:0007669"/>
    <property type="project" value="UniProtKB-UniRule"/>
</dbReference>
<dbReference type="GO" id="GO:0003735">
    <property type="term" value="F:structural constituent of ribosome"/>
    <property type="evidence" value="ECO:0007669"/>
    <property type="project" value="InterPro"/>
</dbReference>
<dbReference type="GO" id="GO:0042274">
    <property type="term" value="P:ribosomal small subunit biogenesis"/>
    <property type="evidence" value="ECO:0007669"/>
    <property type="project" value="TreeGrafter"/>
</dbReference>
<dbReference type="GO" id="GO:0006412">
    <property type="term" value="P:translation"/>
    <property type="evidence" value="ECO:0007669"/>
    <property type="project" value="UniProtKB-UniRule"/>
</dbReference>
<dbReference type="CDD" id="cd00165">
    <property type="entry name" value="S4"/>
    <property type="match status" value="1"/>
</dbReference>
<dbReference type="FunFam" id="1.10.1050.10:FF:000001">
    <property type="entry name" value="30S ribosomal protein S4"/>
    <property type="match status" value="1"/>
</dbReference>
<dbReference type="FunFam" id="3.10.290.10:FF:000001">
    <property type="entry name" value="30S ribosomal protein S4"/>
    <property type="match status" value="1"/>
</dbReference>
<dbReference type="Gene3D" id="1.10.1050.10">
    <property type="entry name" value="Ribosomal Protein S4 Delta 41, Chain A, domain 1"/>
    <property type="match status" value="1"/>
</dbReference>
<dbReference type="Gene3D" id="3.10.290.10">
    <property type="entry name" value="RNA-binding S4 domain"/>
    <property type="match status" value="1"/>
</dbReference>
<dbReference type="HAMAP" id="MF_01306_B">
    <property type="entry name" value="Ribosomal_uS4_B"/>
    <property type="match status" value="1"/>
</dbReference>
<dbReference type="InterPro" id="IPR022801">
    <property type="entry name" value="Ribosomal_uS4"/>
</dbReference>
<dbReference type="InterPro" id="IPR005709">
    <property type="entry name" value="Ribosomal_uS4_bac-type"/>
</dbReference>
<dbReference type="InterPro" id="IPR018079">
    <property type="entry name" value="Ribosomal_uS4_CS"/>
</dbReference>
<dbReference type="InterPro" id="IPR001912">
    <property type="entry name" value="Ribosomal_uS4_N"/>
</dbReference>
<dbReference type="InterPro" id="IPR002942">
    <property type="entry name" value="S4_RNA-bd"/>
</dbReference>
<dbReference type="InterPro" id="IPR036986">
    <property type="entry name" value="S4_RNA-bd_sf"/>
</dbReference>
<dbReference type="NCBIfam" id="NF003717">
    <property type="entry name" value="PRK05327.1"/>
    <property type="match status" value="1"/>
</dbReference>
<dbReference type="NCBIfam" id="TIGR01017">
    <property type="entry name" value="rpsD_bact"/>
    <property type="match status" value="1"/>
</dbReference>
<dbReference type="PANTHER" id="PTHR11831">
    <property type="entry name" value="30S 40S RIBOSOMAL PROTEIN"/>
    <property type="match status" value="1"/>
</dbReference>
<dbReference type="PANTHER" id="PTHR11831:SF4">
    <property type="entry name" value="SMALL RIBOSOMAL SUBUNIT PROTEIN US4M"/>
    <property type="match status" value="1"/>
</dbReference>
<dbReference type="Pfam" id="PF00163">
    <property type="entry name" value="Ribosomal_S4"/>
    <property type="match status" value="1"/>
</dbReference>
<dbReference type="Pfam" id="PF01479">
    <property type="entry name" value="S4"/>
    <property type="match status" value="1"/>
</dbReference>
<dbReference type="SMART" id="SM01390">
    <property type="entry name" value="Ribosomal_S4"/>
    <property type="match status" value="1"/>
</dbReference>
<dbReference type="SMART" id="SM00363">
    <property type="entry name" value="S4"/>
    <property type="match status" value="1"/>
</dbReference>
<dbReference type="SUPFAM" id="SSF55174">
    <property type="entry name" value="Alpha-L RNA-binding motif"/>
    <property type="match status" value="1"/>
</dbReference>
<dbReference type="PROSITE" id="PS00632">
    <property type="entry name" value="RIBOSOMAL_S4"/>
    <property type="match status" value="1"/>
</dbReference>
<dbReference type="PROSITE" id="PS50889">
    <property type="entry name" value="S4"/>
    <property type="match status" value="1"/>
</dbReference>
<reference key="1">
    <citation type="journal article" date="2008" name="J. Biotechnol.">
        <title>The genome of Xanthomonas campestris pv. campestris B100 and its use for the reconstruction of metabolic pathways involved in xanthan biosynthesis.</title>
        <authorList>
            <person name="Vorhoelter F.-J."/>
            <person name="Schneiker S."/>
            <person name="Goesmann A."/>
            <person name="Krause L."/>
            <person name="Bekel T."/>
            <person name="Kaiser O."/>
            <person name="Linke B."/>
            <person name="Patschkowski T."/>
            <person name="Rueckert C."/>
            <person name="Schmid J."/>
            <person name="Sidhu V.K."/>
            <person name="Sieber V."/>
            <person name="Tauch A."/>
            <person name="Watt S.A."/>
            <person name="Weisshaar B."/>
            <person name="Becker A."/>
            <person name="Niehaus K."/>
            <person name="Puehler A."/>
        </authorList>
    </citation>
    <scope>NUCLEOTIDE SEQUENCE [LARGE SCALE GENOMIC DNA]</scope>
    <source>
        <strain>B100</strain>
    </source>
</reference>
<feature type="chain" id="PRO_1000140817" description="Small ribosomal subunit protein uS4">
    <location>
        <begin position="1"/>
        <end position="208"/>
    </location>
</feature>
<feature type="domain" description="S4 RNA-binding" evidence="1">
    <location>
        <begin position="97"/>
        <end position="160"/>
    </location>
</feature>
<keyword id="KW-0687">Ribonucleoprotein</keyword>
<keyword id="KW-0689">Ribosomal protein</keyword>
<keyword id="KW-0694">RNA-binding</keyword>
<keyword id="KW-0699">rRNA-binding</keyword>
<gene>
    <name evidence="1" type="primary">rpsD</name>
    <name type="ordered locus">xcc-b100_3436</name>
</gene>
<accession>B0RU59</accession>
<name>RS4_XANCB</name>
<sequence>MARYIGPTCKLARREGADLSLKSPARALDSKCKLEQKPGQHGAARKGKLSDYATQLREKQKVKRIYGLLERQFRNYYKKASTKKGNTGENLLQLLETRLDNVCYRMGFAVTRPAARQLVSHRGVLVNGKSVNLASYQIKAGDAITLSEKAQKQLRVQEALTVAEQHDMTPSWVEVDSKKFSGVFKAVPDRADLPSDINEALIVELYSK</sequence>
<evidence type="ECO:0000255" key="1">
    <source>
        <dbReference type="HAMAP-Rule" id="MF_01306"/>
    </source>
</evidence>
<evidence type="ECO:0000305" key="2"/>
<organism>
    <name type="scientific">Xanthomonas campestris pv. campestris (strain B100)</name>
    <dbReference type="NCBI Taxonomy" id="509169"/>
    <lineage>
        <taxon>Bacteria</taxon>
        <taxon>Pseudomonadati</taxon>
        <taxon>Pseudomonadota</taxon>
        <taxon>Gammaproteobacteria</taxon>
        <taxon>Lysobacterales</taxon>
        <taxon>Lysobacteraceae</taxon>
        <taxon>Xanthomonas</taxon>
    </lineage>
</organism>